<name>ATPG_TRIV2</name>
<organism>
    <name type="scientific">Trichormus variabilis (strain ATCC 29413 / PCC 7937)</name>
    <name type="common">Anabaena variabilis</name>
    <dbReference type="NCBI Taxonomy" id="240292"/>
    <lineage>
        <taxon>Bacteria</taxon>
        <taxon>Bacillati</taxon>
        <taxon>Cyanobacteriota</taxon>
        <taxon>Cyanophyceae</taxon>
        <taxon>Nostocales</taxon>
        <taxon>Nostocaceae</taxon>
        <taxon>Trichormus</taxon>
    </lineage>
</organism>
<sequence>MPNLKSIRDRIQSVKNTKKITEAMRLVAAARVRRAQEQVIATRPFADRLAQVLYGLQTRLRFEDVDLPLLKKREVKSVGLLVISGDRGLCGGYNTNVIRRAENRAKELKKEGLDYTFVIVGRKAEQYFRRREQPIDASYTGLEQIPTAEEANKIADELLSLFLSEKVDRIELVYTRFVSLVSSRPVIQTLLPLDTQGLEAADDEIFRLTTRGGQFEVERQTVTTQARPLPRDMIFEQDPVQILDSLLPLYLSNQLLRALQESAASELAARMTAMSNASDNAGELIKSLSLSYNKARQAAITQELLEVVGGAEALT</sequence>
<reference key="1">
    <citation type="journal article" date="2014" name="Stand. Genomic Sci.">
        <title>Complete genome sequence of Anabaena variabilis ATCC 29413.</title>
        <authorList>
            <person name="Thiel T."/>
            <person name="Pratte B.S."/>
            <person name="Zhong J."/>
            <person name="Goodwin L."/>
            <person name="Copeland A."/>
            <person name="Lucas S."/>
            <person name="Han C."/>
            <person name="Pitluck S."/>
            <person name="Land M.L."/>
            <person name="Kyrpides N.C."/>
            <person name="Woyke T."/>
        </authorList>
    </citation>
    <scope>NUCLEOTIDE SEQUENCE [LARGE SCALE GENOMIC DNA]</scope>
    <source>
        <strain>ATCC 29413 / PCC 7937</strain>
    </source>
</reference>
<keyword id="KW-0066">ATP synthesis</keyword>
<keyword id="KW-0139">CF(1)</keyword>
<keyword id="KW-0375">Hydrogen ion transport</keyword>
<keyword id="KW-0406">Ion transport</keyword>
<keyword id="KW-0472">Membrane</keyword>
<keyword id="KW-0793">Thylakoid</keyword>
<keyword id="KW-0813">Transport</keyword>
<proteinExistence type="inferred from homology"/>
<comment type="function">
    <text evidence="1">Produces ATP from ADP in the presence of a proton gradient across the membrane. The gamma chain is believed to be important in regulating ATPase activity and the flow of protons through the CF(0) complex.</text>
</comment>
<comment type="subunit">
    <text evidence="1">F-type ATPases have 2 components, CF(1) - the catalytic core - and CF(0) - the membrane proton channel. CF(1) has five subunits: alpha(3), beta(3), gamma(1), delta(1), epsilon(1). CF(0) has three main subunits: a, b and c.</text>
</comment>
<comment type="subcellular location">
    <subcellularLocation>
        <location evidence="1">Cellular thylakoid membrane</location>
        <topology evidence="1">Peripheral membrane protein</topology>
    </subcellularLocation>
</comment>
<comment type="similarity">
    <text evidence="1">Belongs to the ATPase gamma chain family.</text>
</comment>
<dbReference type="EMBL" id="CP000117">
    <property type="protein sequence ID" value="ABA22225.1"/>
    <property type="molecule type" value="Genomic_DNA"/>
</dbReference>
<dbReference type="SMR" id="Q3M9W1"/>
<dbReference type="STRING" id="240292.Ava_2610"/>
<dbReference type="KEGG" id="ava:Ava_2610"/>
<dbReference type="eggNOG" id="COG0224">
    <property type="taxonomic scope" value="Bacteria"/>
</dbReference>
<dbReference type="HOGENOM" id="CLU_050669_0_0_3"/>
<dbReference type="Proteomes" id="UP000002533">
    <property type="component" value="Chromosome"/>
</dbReference>
<dbReference type="GO" id="GO:0031676">
    <property type="term" value="C:plasma membrane-derived thylakoid membrane"/>
    <property type="evidence" value="ECO:0007669"/>
    <property type="project" value="UniProtKB-SubCell"/>
</dbReference>
<dbReference type="GO" id="GO:0045259">
    <property type="term" value="C:proton-transporting ATP synthase complex"/>
    <property type="evidence" value="ECO:0007669"/>
    <property type="project" value="UniProtKB-KW"/>
</dbReference>
<dbReference type="GO" id="GO:0005524">
    <property type="term" value="F:ATP binding"/>
    <property type="evidence" value="ECO:0007669"/>
    <property type="project" value="UniProtKB-UniRule"/>
</dbReference>
<dbReference type="GO" id="GO:0046933">
    <property type="term" value="F:proton-transporting ATP synthase activity, rotational mechanism"/>
    <property type="evidence" value="ECO:0007669"/>
    <property type="project" value="UniProtKB-UniRule"/>
</dbReference>
<dbReference type="CDD" id="cd12151">
    <property type="entry name" value="F1-ATPase_gamma"/>
    <property type="match status" value="1"/>
</dbReference>
<dbReference type="FunFam" id="3.40.1380.10:FF:000006">
    <property type="entry name" value="ATP synthase gamma chain"/>
    <property type="match status" value="1"/>
</dbReference>
<dbReference type="FunFam" id="1.10.287.80:FF:000003">
    <property type="entry name" value="ATP synthase gamma chain, chloroplastic"/>
    <property type="match status" value="1"/>
</dbReference>
<dbReference type="FunFam" id="1.10.287.80:FF:000004">
    <property type="entry name" value="ATP synthase gamma chain, chloroplastic"/>
    <property type="match status" value="1"/>
</dbReference>
<dbReference type="Gene3D" id="3.40.1380.10">
    <property type="match status" value="1"/>
</dbReference>
<dbReference type="Gene3D" id="1.10.287.80">
    <property type="entry name" value="ATP synthase, gamma subunit, helix hairpin domain"/>
    <property type="match status" value="2"/>
</dbReference>
<dbReference type="HAMAP" id="MF_00815">
    <property type="entry name" value="ATP_synth_gamma_bact"/>
    <property type="match status" value="1"/>
</dbReference>
<dbReference type="InterPro" id="IPR035968">
    <property type="entry name" value="ATP_synth_F1_ATPase_gsu"/>
</dbReference>
<dbReference type="InterPro" id="IPR000131">
    <property type="entry name" value="ATP_synth_F1_gsu"/>
</dbReference>
<dbReference type="InterPro" id="IPR023632">
    <property type="entry name" value="ATP_synth_F1_gsu_CS"/>
</dbReference>
<dbReference type="NCBIfam" id="TIGR01146">
    <property type="entry name" value="ATPsyn_F1gamma"/>
    <property type="match status" value="1"/>
</dbReference>
<dbReference type="NCBIfam" id="NF004145">
    <property type="entry name" value="PRK05621.1-2"/>
    <property type="match status" value="1"/>
</dbReference>
<dbReference type="PANTHER" id="PTHR11693">
    <property type="entry name" value="ATP SYNTHASE GAMMA CHAIN"/>
    <property type="match status" value="1"/>
</dbReference>
<dbReference type="PANTHER" id="PTHR11693:SF41">
    <property type="entry name" value="ATP SYNTHASE GAMMA CHAIN, CHLOROPLASTIC"/>
    <property type="match status" value="1"/>
</dbReference>
<dbReference type="Pfam" id="PF00231">
    <property type="entry name" value="ATP-synt"/>
    <property type="match status" value="1"/>
</dbReference>
<dbReference type="PRINTS" id="PR00126">
    <property type="entry name" value="ATPASEGAMMA"/>
</dbReference>
<dbReference type="SUPFAM" id="SSF52943">
    <property type="entry name" value="ATP synthase (F1-ATPase), gamma subunit"/>
    <property type="match status" value="1"/>
</dbReference>
<dbReference type="PROSITE" id="PS00153">
    <property type="entry name" value="ATPASE_GAMMA"/>
    <property type="match status" value="1"/>
</dbReference>
<gene>
    <name evidence="1" type="primary">atpG</name>
    <name evidence="1" type="synonym">atpC</name>
    <name type="ordered locus">Ava_2610</name>
</gene>
<accession>Q3M9W1</accession>
<feature type="chain" id="PRO_1000053153" description="ATP synthase gamma chain">
    <location>
        <begin position="1"/>
        <end position="315"/>
    </location>
</feature>
<evidence type="ECO:0000255" key="1">
    <source>
        <dbReference type="HAMAP-Rule" id="MF_00815"/>
    </source>
</evidence>
<protein>
    <recommendedName>
        <fullName evidence="1">ATP synthase gamma chain</fullName>
    </recommendedName>
    <alternativeName>
        <fullName evidence="1">ATP synthase F1 sector gamma subunit</fullName>
    </alternativeName>
    <alternativeName>
        <fullName evidence="1">F-ATPase gamma subunit</fullName>
    </alternativeName>
</protein>